<evidence type="ECO:0000255" key="1">
    <source>
        <dbReference type="HAMAP-Rule" id="MF_01903"/>
    </source>
</evidence>
<gene>
    <name evidence="1" type="primary">gpt</name>
    <name type="ordered locus">Dvul_1928</name>
</gene>
<sequence>MSTADRYRKVFPVTWEQLHRDAKALSWRLLEKGPYKGIIAIARGGLVPAAVIARELDIHLVETICISSYQWQEQTSSHKVLKTVEGRGEGWLIIDDLVDTGGTARLVREMLPEAHFATVYAKPAGRPLVDTFITEVSQDTWILFPWDSEVQYVVPLVNQPQQS</sequence>
<reference key="1">
    <citation type="journal article" date="2009" name="Environ. Microbiol.">
        <title>Contribution of mobile genetic elements to Desulfovibrio vulgaris genome plasticity.</title>
        <authorList>
            <person name="Walker C.B."/>
            <person name="Stolyar S."/>
            <person name="Chivian D."/>
            <person name="Pinel N."/>
            <person name="Gabster J.A."/>
            <person name="Dehal P.S."/>
            <person name="He Z."/>
            <person name="Yang Z.K."/>
            <person name="Yen H.C."/>
            <person name="Zhou J."/>
            <person name="Wall J.D."/>
            <person name="Hazen T.C."/>
            <person name="Arkin A.P."/>
            <person name="Stahl D.A."/>
        </authorList>
    </citation>
    <scope>NUCLEOTIDE SEQUENCE [LARGE SCALE GENOMIC DNA]</scope>
    <source>
        <strain>DP4</strain>
    </source>
</reference>
<accession>A1VES8</accession>
<organism>
    <name type="scientific">Nitratidesulfovibrio vulgaris (strain DP4)</name>
    <name type="common">Desulfovibrio vulgaris</name>
    <dbReference type="NCBI Taxonomy" id="391774"/>
    <lineage>
        <taxon>Bacteria</taxon>
        <taxon>Pseudomonadati</taxon>
        <taxon>Thermodesulfobacteriota</taxon>
        <taxon>Desulfovibrionia</taxon>
        <taxon>Desulfovibrionales</taxon>
        <taxon>Desulfovibrionaceae</taxon>
        <taxon>Nitratidesulfovibrio</taxon>
    </lineage>
</organism>
<dbReference type="EC" id="2.4.2.-" evidence="1"/>
<dbReference type="EC" id="2.4.2.22" evidence="1"/>
<dbReference type="EMBL" id="CP000527">
    <property type="protein sequence ID" value="ABM28944.1"/>
    <property type="molecule type" value="Genomic_DNA"/>
</dbReference>
<dbReference type="RefSeq" id="WP_011792550.1">
    <property type="nucleotide sequence ID" value="NC_008751.1"/>
</dbReference>
<dbReference type="SMR" id="A1VES8"/>
<dbReference type="KEGG" id="dvl:Dvul_1928"/>
<dbReference type="HOGENOM" id="CLU_080904_3_0_7"/>
<dbReference type="UniPathway" id="UPA00602">
    <property type="reaction ID" value="UER00658"/>
</dbReference>
<dbReference type="UniPathway" id="UPA00909">
    <property type="reaction ID" value="UER00887"/>
</dbReference>
<dbReference type="Proteomes" id="UP000009173">
    <property type="component" value="Chromosome"/>
</dbReference>
<dbReference type="GO" id="GO:0005886">
    <property type="term" value="C:plasma membrane"/>
    <property type="evidence" value="ECO:0007669"/>
    <property type="project" value="UniProtKB-SubCell"/>
</dbReference>
<dbReference type="GO" id="GO:0052657">
    <property type="term" value="F:guanine phosphoribosyltransferase activity"/>
    <property type="evidence" value="ECO:0007669"/>
    <property type="project" value="RHEA"/>
</dbReference>
<dbReference type="GO" id="GO:0004422">
    <property type="term" value="F:hypoxanthine phosphoribosyltransferase activity"/>
    <property type="evidence" value="ECO:0007669"/>
    <property type="project" value="RHEA"/>
</dbReference>
<dbReference type="GO" id="GO:0046872">
    <property type="term" value="F:metal ion binding"/>
    <property type="evidence" value="ECO:0007669"/>
    <property type="project" value="UniProtKB-KW"/>
</dbReference>
<dbReference type="GO" id="GO:0000310">
    <property type="term" value="F:xanthine phosphoribosyltransferase activity"/>
    <property type="evidence" value="ECO:0007669"/>
    <property type="project" value="UniProtKB-EC"/>
</dbReference>
<dbReference type="GO" id="GO:0032263">
    <property type="term" value="P:GMP salvage"/>
    <property type="evidence" value="ECO:0007669"/>
    <property type="project" value="UniProtKB-UniPathway"/>
</dbReference>
<dbReference type="GO" id="GO:0006166">
    <property type="term" value="P:purine ribonucleoside salvage"/>
    <property type="evidence" value="ECO:0007669"/>
    <property type="project" value="UniProtKB-KW"/>
</dbReference>
<dbReference type="GO" id="GO:0032265">
    <property type="term" value="P:XMP salvage"/>
    <property type="evidence" value="ECO:0007669"/>
    <property type="project" value="UniProtKB-UniPathway"/>
</dbReference>
<dbReference type="CDD" id="cd06223">
    <property type="entry name" value="PRTases_typeI"/>
    <property type="match status" value="1"/>
</dbReference>
<dbReference type="Gene3D" id="3.40.50.2020">
    <property type="match status" value="1"/>
</dbReference>
<dbReference type="HAMAP" id="MF_01903">
    <property type="entry name" value="XGPRT"/>
    <property type="match status" value="1"/>
</dbReference>
<dbReference type="InterPro" id="IPR000836">
    <property type="entry name" value="PRibTrfase_dom"/>
</dbReference>
<dbReference type="InterPro" id="IPR029057">
    <property type="entry name" value="PRTase-like"/>
</dbReference>
<dbReference type="InterPro" id="IPR023747">
    <property type="entry name" value="Xanthine_Guanine_PRibTrfase"/>
</dbReference>
<dbReference type="NCBIfam" id="NF006613">
    <property type="entry name" value="PRK09177.1"/>
    <property type="match status" value="1"/>
</dbReference>
<dbReference type="PANTHER" id="PTHR39563">
    <property type="entry name" value="XANTHINE PHOSPHORIBOSYLTRANSFERASE"/>
    <property type="match status" value="1"/>
</dbReference>
<dbReference type="PANTHER" id="PTHR39563:SF1">
    <property type="entry name" value="XANTHINE-GUANINE PHOSPHORIBOSYLTRANSFERASE"/>
    <property type="match status" value="1"/>
</dbReference>
<dbReference type="Pfam" id="PF00156">
    <property type="entry name" value="Pribosyltran"/>
    <property type="match status" value="1"/>
</dbReference>
<dbReference type="SUPFAM" id="SSF53271">
    <property type="entry name" value="PRTase-like"/>
    <property type="match status" value="1"/>
</dbReference>
<dbReference type="PROSITE" id="PS00103">
    <property type="entry name" value="PUR_PYR_PR_TRANSFER"/>
    <property type="match status" value="1"/>
</dbReference>
<name>XGPT_NITV4</name>
<comment type="function">
    <text evidence="1">Purine salvage pathway enzyme that catalyzes the transfer of the ribosyl-5-phosphate group from 5-phospho-alpha-D-ribose 1-diphosphate (PRPP) to the N9 position of the 6-oxopurines guanine and xanthine to form the corresponding ribonucleotides GMP (guanosine 5'-monophosphate) and XMP (xanthosine 5'-monophosphate), with the release of PPi. To a lesser extent, also acts on hypoxanthine.</text>
</comment>
<comment type="catalytic activity">
    <reaction evidence="1">
        <text>GMP + diphosphate = guanine + 5-phospho-alpha-D-ribose 1-diphosphate</text>
        <dbReference type="Rhea" id="RHEA:25424"/>
        <dbReference type="ChEBI" id="CHEBI:16235"/>
        <dbReference type="ChEBI" id="CHEBI:33019"/>
        <dbReference type="ChEBI" id="CHEBI:58017"/>
        <dbReference type="ChEBI" id="CHEBI:58115"/>
    </reaction>
    <physiologicalReaction direction="right-to-left" evidence="1">
        <dbReference type="Rhea" id="RHEA:25426"/>
    </physiologicalReaction>
</comment>
<comment type="catalytic activity">
    <reaction evidence="1">
        <text>XMP + diphosphate = xanthine + 5-phospho-alpha-D-ribose 1-diphosphate</text>
        <dbReference type="Rhea" id="RHEA:10800"/>
        <dbReference type="ChEBI" id="CHEBI:17712"/>
        <dbReference type="ChEBI" id="CHEBI:33019"/>
        <dbReference type="ChEBI" id="CHEBI:57464"/>
        <dbReference type="ChEBI" id="CHEBI:58017"/>
        <dbReference type="EC" id="2.4.2.22"/>
    </reaction>
    <physiologicalReaction direction="right-to-left" evidence="1">
        <dbReference type="Rhea" id="RHEA:10802"/>
    </physiologicalReaction>
</comment>
<comment type="catalytic activity">
    <reaction evidence="1">
        <text>IMP + diphosphate = hypoxanthine + 5-phospho-alpha-D-ribose 1-diphosphate</text>
        <dbReference type="Rhea" id="RHEA:17973"/>
        <dbReference type="ChEBI" id="CHEBI:17368"/>
        <dbReference type="ChEBI" id="CHEBI:33019"/>
        <dbReference type="ChEBI" id="CHEBI:58017"/>
        <dbReference type="ChEBI" id="CHEBI:58053"/>
    </reaction>
    <physiologicalReaction direction="right-to-left" evidence="1">
        <dbReference type="Rhea" id="RHEA:17975"/>
    </physiologicalReaction>
</comment>
<comment type="cofactor">
    <cofactor evidence="1">
        <name>Mg(2+)</name>
        <dbReference type="ChEBI" id="CHEBI:18420"/>
    </cofactor>
</comment>
<comment type="pathway">
    <text evidence="1">Purine metabolism; GMP biosynthesis via salvage pathway; GMP from guanine: step 1/1.</text>
</comment>
<comment type="pathway">
    <text evidence="1">Purine metabolism; XMP biosynthesis via salvage pathway; XMP from xanthine: step 1/1.</text>
</comment>
<comment type="subunit">
    <text evidence="1">Homotetramer.</text>
</comment>
<comment type="subcellular location">
    <subcellularLocation>
        <location evidence="1">Cell inner membrane</location>
        <topology evidence="1">Peripheral membrane protein</topology>
    </subcellularLocation>
</comment>
<comment type="similarity">
    <text evidence="1">Belongs to the purine/pyrimidine phosphoribosyltransferase family. XGPT subfamily.</text>
</comment>
<proteinExistence type="inferred from homology"/>
<keyword id="KW-0997">Cell inner membrane</keyword>
<keyword id="KW-1003">Cell membrane</keyword>
<keyword id="KW-0328">Glycosyltransferase</keyword>
<keyword id="KW-0460">Magnesium</keyword>
<keyword id="KW-0472">Membrane</keyword>
<keyword id="KW-0479">Metal-binding</keyword>
<keyword id="KW-0660">Purine salvage</keyword>
<keyword id="KW-0808">Transferase</keyword>
<protein>
    <recommendedName>
        <fullName evidence="1">Xanthine-guanine phosphoribosyltransferase</fullName>
        <shortName evidence="1">XGPRT</shortName>
        <ecNumber evidence="1">2.4.2.-</ecNumber>
        <ecNumber evidence="1">2.4.2.22</ecNumber>
    </recommendedName>
    <alternativeName>
        <fullName evidence="1">Xanthine phosphoribosyltransferase</fullName>
    </alternativeName>
</protein>
<feature type="chain" id="PRO_1000070604" description="Xanthine-guanine phosphoribosyltransferase">
    <location>
        <begin position="1"/>
        <end position="163"/>
    </location>
</feature>
<feature type="binding site" evidence="1">
    <location>
        <begin position="43"/>
        <end position="44"/>
    </location>
    <ligand>
        <name>5-phospho-alpha-D-ribose 1-diphosphate</name>
        <dbReference type="ChEBI" id="CHEBI:58017"/>
    </ligand>
</feature>
<feature type="binding site" evidence="1">
    <location>
        <begin position="95"/>
        <end position="103"/>
    </location>
    <ligand>
        <name>5-phospho-alpha-D-ribose 1-diphosphate</name>
        <dbReference type="ChEBI" id="CHEBI:58017"/>
    </ligand>
</feature>
<feature type="binding site" evidence="1">
    <location>
        <position position="96"/>
    </location>
    <ligand>
        <name>Mg(2+)</name>
        <dbReference type="ChEBI" id="CHEBI:18420"/>
    </ligand>
</feature>
<feature type="binding site" evidence="1">
    <location>
        <begin position="99"/>
        <end position="103"/>
    </location>
    <ligand>
        <name>GMP</name>
        <dbReference type="ChEBI" id="CHEBI:58115"/>
    </ligand>
</feature>
<feature type="binding site" evidence="1">
    <location>
        <position position="99"/>
    </location>
    <ligand>
        <name>guanine</name>
        <dbReference type="ChEBI" id="CHEBI:16235"/>
    </ligand>
</feature>
<feature type="binding site" evidence="1">
    <location>
        <position position="99"/>
    </location>
    <ligand>
        <name>xanthine</name>
        <dbReference type="ChEBI" id="CHEBI:17712"/>
    </ligand>
</feature>
<feature type="binding site" evidence="1">
    <location>
        <begin position="141"/>
        <end position="142"/>
    </location>
    <ligand>
        <name>GMP</name>
        <dbReference type="ChEBI" id="CHEBI:58115"/>
    </ligand>
</feature>
<feature type="binding site" evidence="1">
    <location>
        <position position="142"/>
    </location>
    <ligand>
        <name>guanine</name>
        <dbReference type="ChEBI" id="CHEBI:16235"/>
    </ligand>
</feature>
<feature type="binding site" evidence="1">
    <location>
        <position position="142"/>
    </location>
    <ligand>
        <name>xanthine</name>
        <dbReference type="ChEBI" id="CHEBI:17712"/>
    </ligand>
</feature>